<dbReference type="EC" id="4.1.1.11" evidence="1"/>
<dbReference type="EMBL" id="AP009044">
    <property type="protein sequence ID" value="BAF53177.1"/>
    <property type="molecule type" value="Genomic_DNA"/>
</dbReference>
<dbReference type="RefSeq" id="WP_003857183.1">
    <property type="nucleotide sequence ID" value="NC_009342.1"/>
</dbReference>
<dbReference type="SMR" id="A4QAD0"/>
<dbReference type="GeneID" id="1021120"/>
<dbReference type="KEGG" id="cgt:cgR_0214"/>
<dbReference type="HOGENOM" id="CLU_115305_2_0_11"/>
<dbReference type="PhylomeDB" id="A4QAD0"/>
<dbReference type="UniPathway" id="UPA00028">
    <property type="reaction ID" value="UER00002"/>
</dbReference>
<dbReference type="Proteomes" id="UP000006698">
    <property type="component" value="Chromosome"/>
</dbReference>
<dbReference type="GO" id="GO:0005829">
    <property type="term" value="C:cytosol"/>
    <property type="evidence" value="ECO:0007669"/>
    <property type="project" value="TreeGrafter"/>
</dbReference>
<dbReference type="GO" id="GO:0004068">
    <property type="term" value="F:aspartate 1-decarboxylase activity"/>
    <property type="evidence" value="ECO:0007669"/>
    <property type="project" value="UniProtKB-UniRule"/>
</dbReference>
<dbReference type="GO" id="GO:0006523">
    <property type="term" value="P:alanine biosynthetic process"/>
    <property type="evidence" value="ECO:0007669"/>
    <property type="project" value="InterPro"/>
</dbReference>
<dbReference type="GO" id="GO:0015940">
    <property type="term" value="P:pantothenate biosynthetic process"/>
    <property type="evidence" value="ECO:0007669"/>
    <property type="project" value="UniProtKB-UniRule"/>
</dbReference>
<dbReference type="CDD" id="cd06919">
    <property type="entry name" value="Asp_decarbox"/>
    <property type="match status" value="1"/>
</dbReference>
<dbReference type="Gene3D" id="2.40.40.20">
    <property type="match status" value="1"/>
</dbReference>
<dbReference type="HAMAP" id="MF_00446">
    <property type="entry name" value="PanD"/>
    <property type="match status" value="1"/>
</dbReference>
<dbReference type="InterPro" id="IPR009010">
    <property type="entry name" value="Asp_de-COase-like_dom_sf"/>
</dbReference>
<dbReference type="InterPro" id="IPR003190">
    <property type="entry name" value="Asp_decarbox"/>
</dbReference>
<dbReference type="NCBIfam" id="TIGR00223">
    <property type="entry name" value="panD"/>
    <property type="match status" value="1"/>
</dbReference>
<dbReference type="PANTHER" id="PTHR21012">
    <property type="entry name" value="ASPARTATE 1-DECARBOXYLASE"/>
    <property type="match status" value="1"/>
</dbReference>
<dbReference type="PANTHER" id="PTHR21012:SF0">
    <property type="entry name" value="ASPARTATE 1-DECARBOXYLASE"/>
    <property type="match status" value="1"/>
</dbReference>
<dbReference type="Pfam" id="PF02261">
    <property type="entry name" value="Asp_decarbox"/>
    <property type="match status" value="1"/>
</dbReference>
<dbReference type="PIRSF" id="PIRSF006246">
    <property type="entry name" value="Asp_decarbox"/>
    <property type="match status" value="1"/>
</dbReference>
<dbReference type="SUPFAM" id="SSF50692">
    <property type="entry name" value="ADC-like"/>
    <property type="match status" value="1"/>
</dbReference>
<gene>
    <name evidence="1" type="primary">panD</name>
    <name type="ordered locus">cgR_0214</name>
</gene>
<comment type="function">
    <text evidence="1">Catalyzes the pyruvoyl-dependent decarboxylation of aspartate to produce beta-alanine.</text>
</comment>
<comment type="catalytic activity">
    <reaction evidence="1">
        <text>L-aspartate + H(+) = beta-alanine + CO2</text>
        <dbReference type="Rhea" id="RHEA:19497"/>
        <dbReference type="ChEBI" id="CHEBI:15378"/>
        <dbReference type="ChEBI" id="CHEBI:16526"/>
        <dbReference type="ChEBI" id="CHEBI:29991"/>
        <dbReference type="ChEBI" id="CHEBI:57966"/>
        <dbReference type="EC" id="4.1.1.11"/>
    </reaction>
</comment>
<comment type="cofactor">
    <cofactor evidence="1">
        <name>pyruvate</name>
        <dbReference type="ChEBI" id="CHEBI:15361"/>
    </cofactor>
    <text evidence="1">Binds 1 pyruvoyl group covalently per subunit.</text>
</comment>
<comment type="pathway">
    <text evidence="1">Cofactor biosynthesis; (R)-pantothenate biosynthesis; beta-alanine from L-aspartate: step 1/1.</text>
</comment>
<comment type="subunit">
    <text evidence="1">Heterooctamer of four alpha and four beta subunits.</text>
</comment>
<comment type="subcellular location">
    <subcellularLocation>
        <location evidence="1">Cytoplasm</location>
    </subcellularLocation>
</comment>
<comment type="PTM">
    <text evidence="1">Is synthesized initially as an inactive proenzyme, which is activated by self-cleavage at a specific serine bond to produce a beta-subunit with a hydroxyl group at its C-terminus and an alpha-subunit with a pyruvoyl group at its N-terminus.</text>
</comment>
<comment type="similarity">
    <text evidence="1">Belongs to the PanD family.</text>
</comment>
<keyword id="KW-0068">Autocatalytic cleavage</keyword>
<keyword id="KW-0963">Cytoplasm</keyword>
<keyword id="KW-0210">Decarboxylase</keyword>
<keyword id="KW-0456">Lyase</keyword>
<keyword id="KW-0566">Pantothenate biosynthesis</keyword>
<keyword id="KW-0670">Pyruvate</keyword>
<keyword id="KW-0704">Schiff base</keyword>
<keyword id="KW-0865">Zymogen</keyword>
<organism>
    <name type="scientific">Corynebacterium glutamicum (strain R)</name>
    <dbReference type="NCBI Taxonomy" id="340322"/>
    <lineage>
        <taxon>Bacteria</taxon>
        <taxon>Bacillati</taxon>
        <taxon>Actinomycetota</taxon>
        <taxon>Actinomycetes</taxon>
        <taxon>Mycobacteriales</taxon>
        <taxon>Corynebacteriaceae</taxon>
        <taxon>Corynebacterium</taxon>
    </lineage>
</organism>
<reference key="1">
    <citation type="journal article" date="2007" name="Microbiology">
        <title>Comparative analysis of the Corynebacterium glutamicum group and complete genome sequence of strain R.</title>
        <authorList>
            <person name="Yukawa H."/>
            <person name="Omumasaba C.A."/>
            <person name="Nonaka H."/>
            <person name="Kos P."/>
            <person name="Okai N."/>
            <person name="Suzuki N."/>
            <person name="Suda M."/>
            <person name="Tsuge Y."/>
            <person name="Watanabe J."/>
            <person name="Ikeda Y."/>
            <person name="Vertes A.A."/>
            <person name="Inui M."/>
        </authorList>
    </citation>
    <scope>NUCLEOTIDE SEQUENCE [LARGE SCALE GENOMIC DNA]</scope>
    <source>
        <strain>R</strain>
    </source>
</reference>
<protein>
    <recommendedName>
        <fullName evidence="1">Aspartate 1-decarboxylase</fullName>
        <ecNumber evidence="1">4.1.1.11</ecNumber>
    </recommendedName>
    <alternativeName>
        <fullName evidence="1">Aspartate alpha-decarboxylase</fullName>
    </alternativeName>
    <component>
        <recommendedName>
            <fullName evidence="1">Aspartate 1-decarboxylase beta chain</fullName>
        </recommendedName>
    </component>
    <component>
        <recommendedName>
            <fullName evidence="1">Aspartate 1-decarboxylase alpha chain</fullName>
        </recommendedName>
    </component>
</protein>
<sequence>MLRTILGSKIHRATVTQADLDYVGSVTIDADLVHAAGLIEGEKVAIVDITNGARLETYVIVGDAGTGNICINGAAAHLINPGDLVIIMSYLQATDAEAKAYEPKIVHVDADNRIVALGNDLAEALPGSGLLTSRSI</sequence>
<proteinExistence type="inferred from homology"/>
<accession>A4QAD0</accession>
<feature type="chain" id="PRO_0000306957" description="Aspartate 1-decarboxylase beta chain" evidence="1">
    <location>
        <begin position="1"/>
        <end position="24"/>
    </location>
</feature>
<feature type="chain" id="PRO_0000306958" description="Aspartate 1-decarboxylase alpha chain" evidence="1">
    <location>
        <begin position="25"/>
        <end position="136"/>
    </location>
</feature>
<feature type="active site" description="Schiff-base intermediate with substrate; via pyruvic acid" evidence="1">
    <location>
        <position position="25"/>
    </location>
</feature>
<feature type="active site" description="Proton donor" evidence="1">
    <location>
        <position position="58"/>
    </location>
</feature>
<feature type="binding site" evidence="1">
    <location>
        <position position="57"/>
    </location>
    <ligand>
        <name>substrate</name>
    </ligand>
</feature>
<feature type="binding site" evidence="1">
    <location>
        <begin position="73"/>
        <end position="75"/>
    </location>
    <ligand>
        <name>substrate</name>
    </ligand>
</feature>
<feature type="modified residue" description="Pyruvic acid (Ser)" evidence="1">
    <location>
        <position position="25"/>
    </location>
</feature>
<evidence type="ECO:0000255" key="1">
    <source>
        <dbReference type="HAMAP-Rule" id="MF_00446"/>
    </source>
</evidence>
<name>PAND_CORGB</name>